<organism>
    <name type="scientific">Caenorhabditis elegans</name>
    <dbReference type="NCBI Taxonomy" id="6239"/>
    <lineage>
        <taxon>Eukaryota</taxon>
        <taxon>Metazoa</taxon>
        <taxon>Ecdysozoa</taxon>
        <taxon>Nematoda</taxon>
        <taxon>Chromadorea</taxon>
        <taxon>Rhabditida</taxon>
        <taxon>Rhabditina</taxon>
        <taxon>Rhabditomorpha</taxon>
        <taxon>Rhabditoidea</taxon>
        <taxon>Rhabditidae</taxon>
        <taxon>Peloderinae</taxon>
        <taxon>Caenorhabditis</taxon>
    </lineage>
</organism>
<keyword id="KW-0175">Coiled coil</keyword>
<keyword id="KW-1185">Reference proteome</keyword>
<gene>
    <name type="ORF">F13E6.1</name>
</gene>
<proteinExistence type="inferred from homology"/>
<dbReference type="EMBL" id="Z68105">
    <property type="protein sequence ID" value="CAA92122.2"/>
    <property type="molecule type" value="Genomic_DNA"/>
</dbReference>
<dbReference type="PIR" id="E89632">
    <property type="entry name" value="E89632"/>
</dbReference>
<dbReference type="RefSeq" id="NP_001369895.1">
    <property type="nucleotide sequence ID" value="NM_001383637.2"/>
</dbReference>
<dbReference type="RefSeq" id="NP_509787.2">
    <property type="nucleotide sequence ID" value="NM_077386.5"/>
</dbReference>
<dbReference type="SMR" id="P55326"/>
<dbReference type="BioGRID" id="46177">
    <property type="interactions" value="11"/>
</dbReference>
<dbReference type="FunCoup" id="P55326">
    <property type="interactions" value="1351"/>
</dbReference>
<dbReference type="IntAct" id="P55326">
    <property type="interactions" value="3"/>
</dbReference>
<dbReference type="STRING" id="6239.F13E6.1.1"/>
<dbReference type="iPTMnet" id="P55326"/>
<dbReference type="PaxDb" id="6239-F13E6.1"/>
<dbReference type="PeptideAtlas" id="P55326"/>
<dbReference type="EnsemblMetazoa" id="F13E6.1.1">
    <property type="protein sequence ID" value="F13E6.1.1"/>
    <property type="gene ID" value="WBGene00008745"/>
</dbReference>
<dbReference type="GeneID" id="181265"/>
<dbReference type="UCSC" id="F13E6.1">
    <property type="organism name" value="c. elegans"/>
</dbReference>
<dbReference type="AGR" id="WB:WBGene00008745"/>
<dbReference type="WormBase" id="F13E6.1">
    <property type="protein sequence ID" value="CE31474"/>
    <property type="gene ID" value="WBGene00008745"/>
</dbReference>
<dbReference type="eggNOG" id="KOG4010">
    <property type="taxonomic scope" value="Eukaryota"/>
</dbReference>
<dbReference type="GeneTree" id="ENSGT00940000168966"/>
<dbReference type="HOGENOM" id="CLU_106887_0_0_1"/>
<dbReference type="InParanoid" id="P55326"/>
<dbReference type="OMA" id="SEAYHRT"/>
<dbReference type="OrthoDB" id="10000687at2759"/>
<dbReference type="PhylomeDB" id="P55326"/>
<dbReference type="Reactome" id="R-CEL-432722">
    <property type="pathway name" value="Golgi Associated Vesicle Biogenesis"/>
</dbReference>
<dbReference type="PRO" id="PR:P55326"/>
<dbReference type="Proteomes" id="UP000001940">
    <property type="component" value="Chromosome X"/>
</dbReference>
<dbReference type="Bgee" id="WBGene00008745">
    <property type="expression patterns" value="Expressed in pharyngeal muscle cell (C elegans) and 4 other cell types or tissues"/>
</dbReference>
<dbReference type="GO" id="GO:0005737">
    <property type="term" value="C:cytoplasm"/>
    <property type="evidence" value="ECO:0000318"/>
    <property type="project" value="GO_Central"/>
</dbReference>
<dbReference type="InterPro" id="IPR007327">
    <property type="entry name" value="TPD52"/>
</dbReference>
<dbReference type="PANTHER" id="PTHR19307">
    <property type="entry name" value="TUMOR PROTEIN D52"/>
    <property type="match status" value="1"/>
</dbReference>
<dbReference type="PANTHER" id="PTHR19307:SF14">
    <property type="entry name" value="TUMOR PROTEIN D52"/>
    <property type="match status" value="1"/>
</dbReference>
<dbReference type="Pfam" id="PF04201">
    <property type="entry name" value="TPD52"/>
    <property type="match status" value="1"/>
</dbReference>
<comment type="similarity">
    <text evidence="3">Belongs to the TPD52 family.</text>
</comment>
<feature type="chain" id="PRO_0000185748" description="Uncharacterized protein F13E6.1">
    <location>
        <begin position="1"/>
        <end position="195"/>
    </location>
</feature>
<feature type="region of interest" description="Disordered" evidence="2">
    <location>
        <begin position="1"/>
        <end position="54"/>
    </location>
</feature>
<feature type="region of interest" description="Disordered" evidence="2">
    <location>
        <begin position="173"/>
        <end position="195"/>
    </location>
</feature>
<feature type="coiled-coil region" evidence="1">
    <location>
        <begin position="48"/>
        <end position="97"/>
    </location>
</feature>
<feature type="compositionally biased region" description="Basic and acidic residues" evidence="2">
    <location>
        <begin position="7"/>
        <end position="20"/>
    </location>
</feature>
<feature type="compositionally biased region" description="Polar residues" evidence="2">
    <location>
        <begin position="45"/>
        <end position="54"/>
    </location>
</feature>
<sequence length="195" mass="21287">MPKGNKKPNEKKEELEKFAKELQGSDSDEDAVVIEQPTVEPKLPQNDSSSSNKIVLSQAEKDLLRTELDKTEEEISTLKQVLSARQKHAAELKRKLGLTPFSELSQDINRSLKTVTDTDAYQKTAEVAAATSDTVKEKWNDMRNSSLFKSFESKLGSALNNAKMAASTSIDHLAGAARGPSQTGTPVAEEAKPIS</sequence>
<reference key="1">
    <citation type="journal article" date="1998" name="Science">
        <title>Genome sequence of the nematode C. elegans: a platform for investigating biology.</title>
        <authorList>
            <consortium name="The C. elegans sequencing consortium"/>
        </authorList>
    </citation>
    <scope>NUCLEOTIDE SEQUENCE [LARGE SCALE GENOMIC DNA]</scope>
    <source>
        <strain>Bristol N2</strain>
    </source>
</reference>
<evidence type="ECO:0000255" key="1"/>
<evidence type="ECO:0000256" key="2">
    <source>
        <dbReference type="SAM" id="MobiDB-lite"/>
    </source>
</evidence>
<evidence type="ECO:0000305" key="3"/>
<protein>
    <recommendedName>
        <fullName>Uncharacterized protein F13E6.1</fullName>
    </recommendedName>
</protein>
<name>YZG1_CAEEL</name>
<accession>P55326</accession>
<accession>Q19405</accession>